<evidence type="ECO:0000255" key="1">
    <source>
        <dbReference type="HAMAP-Rule" id="MF_01147"/>
    </source>
</evidence>
<keyword id="KW-0997">Cell inner membrane</keyword>
<keyword id="KW-1003">Cell membrane</keyword>
<keyword id="KW-0472">Membrane</keyword>
<keyword id="KW-0808">Transferase</keyword>
<keyword id="KW-0812">Transmembrane</keyword>
<keyword id="KW-1133">Transmembrane helix</keyword>
<proteinExistence type="inferred from homology"/>
<organism>
    <name type="scientific">Salmonella gallinarum (strain 287/91 / NCTC 13346)</name>
    <dbReference type="NCBI Taxonomy" id="550538"/>
    <lineage>
        <taxon>Bacteria</taxon>
        <taxon>Pseudomonadati</taxon>
        <taxon>Pseudomonadota</taxon>
        <taxon>Gammaproteobacteria</taxon>
        <taxon>Enterobacterales</taxon>
        <taxon>Enterobacteriaceae</taxon>
        <taxon>Salmonella</taxon>
    </lineage>
</organism>
<comment type="function">
    <text evidence="1">Catalyzes the transfer of the diacylglyceryl group from phosphatidylglycerol to the sulfhydryl group of the N-terminal cysteine of a prolipoprotein, the first step in the formation of mature lipoproteins.</text>
</comment>
<comment type="catalytic activity">
    <reaction evidence="1">
        <text>L-cysteinyl-[prolipoprotein] + a 1,2-diacyl-sn-glycero-3-phospho-(1'-sn-glycerol) = an S-1,2-diacyl-sn-glyceryl-L-cysteinyl-[prolipoprotein] + sn-glycerol 1-phosphate + H(+)</text>
        <dbReference type="Rhea" id="RHEA:56712"/>
        <dbReference type="Rhea" id="RHEA-COMP:14679"/>
        <dbReference type="Rhea" id="RHEA-COMP:14680"/>
        <dbReference type="ChEBI" id="CHEBI:15378"/>
        <dbReference type="ChEBI" id="CHEBI:29950"/>
        <dbReference type="ChEBI" id="CHEBI:57685"/>
        <dbReference type="ChEBI" id="CHEBI:64716"/>
        <dbReference type="ChEBI" id="CHEBI:140658"/>
        <dbReference type="EC" id="2.5.1.145"/>
    </reaction>
</comment>
<comment type="pathway">
    <text evidence="1">Protein modification; lipoprotein biosynthesis (diacylglyceryl transfer).</text>
</comment>
<comment type="subcellular location">
    <subcellularLocation>
        <location evidence="1">Cell inner membrane</location>
        <topology evidence="1">Multi-pass membrane protein</topology>
    </subcellularLocation>
</comment>
<comment type="similarity">
    <text evidence="1">Belongs to the Lgt family.</text>
</comment>
<sequence>MTSSYLHFPDFDPVIFSIGPVALHWYGLMYLVGFVFAMWLAVRRANRPGSGWTKNEVENLLYAGFLGVFLGGRIGYVLFYNFPLFLDNPLYLFRVWDGGMSFHGGLIGVILVMIIFARRTKRSFFQVSDFIAPLIPFGLGAGRLGNFINGELWGRVDPDFRFAMLFPGSRAEDIALLPSHPQWQPIFDTYGVLPRHPSQLYELALEGVVLFIILNLFIRKPRPMGAVSGLFLIGYGAFRIIVEFFRQPDAQFTGAWVQYISMGQILSIPMIIAGAIMMVWAYRRRPQQHVS</sequence>
<protein>
    <recommendedName>
        <fullName evidence="1">Phosphatidylglycerol--prolipoprotein diacylglyceryl transferase</fullName>
        <ecNumber evidence="1">2.5.1.145</ecNumber>
    </recommendedName>
</protein>
<gene>
    <name evidence="1" type="primary">lgt</name>
    <name type="ordered locus">SG2910</name>
</gene>
<dbReference type="EC" id="2.5.1.145" evidence="1"/>
<dbReference type="EMBL" id="AM933173">
    <property type="protein sequence ID" value="CAR38716.1"/>
    <property type="molecule type" value="Genomic_DNA"/>
</dbReference>
<dbReference type="RefSeq" id="WP_000204645.1">
    <property type="nucleotide sequence ID" value="NC_011274.1"/>
</dbReference>
<dbReference type="SMR" id="B5RDX8"/>
<dbReference type="KEGG" id="seg:SG2910"/>
<dbReference type="HOGENOM" id="CLU_013386_1_0_6"/>
<dbReference type="UniPathway" id="UPA00664"/>
<dbReference type="Proteomes" id="UP000008321">
    <property type="component" value="Chromosome"/>
</dbReference>
<dbReference type="GO" id="GO:0005886">
    <property type="term" value="C:plasma membrane"/>
    <property type="evidence" value="ECO:0007669"/>
    <property type="project" value="UniProtKB-SubCell"/>
</dbReference>
<dbReference type="GO" id="GO:0008961">
    <property type="term" value="F:phosphatidylglycerol-prolipoprotein diacylglyceryl transferase activity"/>
    <property type="evidence" value="ECO:0007669"/>
    <property type="project" value="UniProtKB-UniRule"/>
</dbReference>
<dbReference type="GO" id="GO:0042158">
    <property type="term" value="P:lipoprotein biosynthetic process"/>
    <property type="evidence" value="ECO:0007669"/>
    <property type="project" value="UniProtKB-UniRule"/>
</dbReference>
<dbReference type="HAMAP" id="MF_01147">
    <property type="entry name" value="Lgt"/>
    <property type="match status" value="1"/>
</dbReference>
<dbReference type="InterPro" id="IPR001640">
    <property type="entry name" value="Lgt"/>
</dbReference>
<dbReference type="NCBIfam" id="TIGR00544">
    <property type="entry name" value="lgt"/>
    <property type="match status" value="1"/>
</dbReference>
<dbReference type="PANTHER" id="PTHR30589:SF0">
    <property type="entry name" value="PHOSPHATIDYLGLYCEROL--PROLIPOPROTEIN DIACYLGLYCERYL TRANSFERASE"/>
    <property type="match status" value="1"/>
</dbReference>
<dbReference type="PANTHER" id="PTHR30589">
    <property type="entry name" value="PROLIPOPROTEIN DIACYLGLYCERYL TRANSFERASE"/>
    <property type="match status" value="1"/>
</dbReference>
<dbReference type="Pfam" id="PF01790">
    <property type="entry name" value="LGT"/>
    <property type="match status" value="1"/>
</dbReference>
<dbReference type="PROSITE" id="PS01311">
    <property type="entry name" value="LGT"/>
    <property type="match status" value="1"/>
</dbReference>
<name>LGT_SALG2</name>
<accession>B5RDX8</accession>
<reference key="1">
    <citation type="journal article" date="2008" name="Genome Res.">
        <title>Comparative genome analysis of Salmonella enteritidis PT4 and Salmonella gallinarum 287/91 provides insights into evolutionary and host adaptation pathways.</title>
        <authorList>
            <person name="Thomson N.R."/>
            <person name="Clayton D.J."/>
            <person name="Windhorst D."/>
            <person name="Vernikos G."/>
            <person name="Davidson S."/>
            <person name="Churcher C."/>
            <person name="Quail M.A."/>
            <person name="Stevens M."/>
            <person name="Jones M.A."/>
            <person name="Watson M."/>
            <person name="Barron A."/>
            <person name="Layton A."/>
            <person name="Pickard D."/>
            <person name="Kingsley R.A."/>
            <person name="Bignell A."/>
            <person name="Clark L."/>
            <person name="Harris B."/>
            <person name="Ormond D."/>
            <person name="Abdellah Z."/>
            <person name="Brooks K."/>
            <person name="Cherevach I."/>
            <person name="Chillingworth T."/>
            <person name="Woodward J."/>
            <person name="Norberczak H."/>
            <person name="Lord A."/>
            <person name="Arrowsmith C."/>
            <person name="Jagels K."/>
            <person name="Moule S."/>
            <person name="Mungall K."/>
            <person name="Saunders M."/>
            <person name="Whitehead S."/>
            <person name="Chabalgoity J.A."/>
            <person name="Maskell D."/>
            <person name="Humphreys T."/>
            <person name="Roberts M."/>
            <person name="Barrow P.A."/>
            <person name="Dougan G."/>
            <person name="Parkhill J."/>
        </authorList>
    </citation>
    <scope>NUCLEOTIDE SEQUENCE [LARGE SCALE GENOMIC DNA]</scope>
    <source>
        <strain>287/91 / NCTC 13346</strain>
    </source>
</reference>
<feature type="chain" id="PRO_1000137454" description="Phosphatidylglycerol--prolipoprotein diacylglyceryl transferase">
    <location>
        <begin position="1"/>
        <end position="291"/>
    </location>
</feature>
<feature type="transmembrane region" description="Helical" evidence="1">
    <location>
        <begin position="21"/>
        <end position="41"/>
    </location>
</feature>
<feature type="transmembrane region" description="Helical" evidence="1">
    <location>
        <begin position="60"/>
        <end position="80"/>
    </location>
</feature>
<feature type="transmembrane region" description="Helical" evidence="1">
    <location>
        <begin position="96"/>
        <end position="116"/>
    </location>
</feature>
<feature type="transmembrane region" description="Helical" evidence="1">
    <location>
        <begin position="130"/>
        <end position="150"/>
    </location>
</feature>
<feature type="transmembrane region" description="Helical" evidence="1">
    <location>
        <begin position="198"/>
        <end position="218"/>
    </location>
</feature>
<feature type="transmembrane region" description="Helical" evidence="1">
    <location>
        <begin position="225"/>
        <end position="245"/>
    </location>
</feature>
<feature type="transmembrane region" description="Helical" evidence="1">
    <location>
        <begin position="260"/>
        <end position="280"/>
    </location>
</feature>
<feature type="binding site" evidence="1">
    <location>
        <position position="143"/>
    </location>
    <ligand>
        <name>a 1,2-diacyl-sn-glycero-3-phospho-(1'-sn-glycerol)</name>
        <dbReference type="ChEBI" id="CHEBI:64716"/>
    </ligand>
</feature>